<proteinExistence type="inferred from homology"/>
<keyword id="KW-0028">Amino-acid biosynthesis</keyword>
<keyword id="KW-0963">Cytoplasm</keyword>
<keyword id="KW-0368">Histidine biosynthesis</keyword>
<keyword id="KW-0413">Isomerase</keyword>
<keyword id="KW-1185">Reference proteome</keyword>
<feature type="chain" id="PRO_0000141996" description="1-(5-phosphoribosyl)-5-[(5-phosphoribosylamino)methylideneamino] imidazole-4-carboxamide isomerase">
    <location>
        <begin position="1"/>
        <end position="260"/>
    </location>
</feature>
<feature type="active site" description="Proton acceptor" evidence="1">
    <location>
        <position position="8"/>
    </location>
</feature>
<feature type="active site" description="Proton donor" evidence="1">
    <location>
        <position position="130"/>
    </location>
</feature>
<gene>
    <name evidence="1" type="primary">hisA</name>
    <name type="ordered locus">CT0477</name>
</gene>
<organism>
    <name type="scientific">Chlorobaculum tepidum (strain ATCC 49652 / DSM 12025 / NBRC 103806 / TLS)</name>
    <name type="common">Chlorobium tepidum</name>
    <dbReference type="NCBI Taxonomy" id="194439"/>
    <lineage>
        <taxon>Bacteria</taxon>
        <taxon>Pseudomonadati</taxon>
        <taxon>Chlorobiota</taxon>
        <taxon>Chlorobiia</taxon>
        <taxon>Chlorobiales</taxon>
        <taxon>Chlorobiaceae</taxon>
        <taxon>Chlorobaculum</taxon>
    </lineage>
</organism>
<sequence>MLIIPAIDIKEGKCVRLTRGDFAQKKIYLDNPCDMAVIWRKQNAKMIHVVDLDAALTGETVNFERIREIVNVLDIPIQVGGGIRSVEAVEKYLDIGVSRVVIGSAAVTNPGLIADLLKKYRPSQIVVGIDAEHGVPKIKGWTESSNMQDYELAGEMKKLGVERIIYTDITRDGMLQGVGYETTKRFAEKAGMKVTASGGATTSDDLHKLRSLEKYGVDSVIIGKALYECNFPCQELWYAYEQGLGIDGEFSTARKKECCS</sequence>
<evidence type="ECO:0000255" key="1">
    <source>
        <dbReference type="HAMAP-Rule" id="MF_01014"/>
    </source>
</evidence>
<protein>
    <recommendedName>
        <fullName evidence="1">1-(5-phosphoribosyl)-5-[(5-phosphoribosylamino)methylideneamino] imidazole-4-carboxamide isomerase</fullName>
        <ecNumber evidence="1">5.3.1.16</ecNumber>
    </recommendedName>
    <alternativeName>
        <fullName evidence="1">Phosphoribosylformimino-5-aminoimidazole carboxamide ribotide isomerase</fullName>
    </alternativeName>
</protein>
<comment type="catalytic activity">
    <reaction evidence="1">
        <text>1-(5-phospho-beta-D-ribosyl)-5-[(5-phospho-beta-D-ribosylamino)methylideneamino]imidazole-4-carboxamide = 5-[(5-phospho-1-deoxy-D-ribulos-1-ylimino)methylamino]-1-(5-phospho-beta-D-ribosyl)imidazole-4-carboxamide</text>
        <dbReference type="Rhea" id="RHEA:15469"/>
        <dbReference type="ChEBI" id="CHEBI:58435"/>
        <dbReference type="ChEBI" id="CHEBI:58525"/>
        <dbReference type="EC" id="5.3.1.16"/>
    </reaction>
</comment>
<comment type="pathway">
    <text evidence="1">Amino-acid biosynthesis; L-histidine biosynthesis; L-histidine from 5-phospho-alpha-D-ribose 1-diphosphate: step 4/9.</text>
</comment>
<comment type="subcellular location">
    <subcellularLocation>
        <location evidence="1">Cytoplasm</location>
    </subcellularLocation>
</comment>
<comment type="similarity">
    <text evidence="1">Belongs to the HisA/HisF family.</text>
</comment>
<reference key="1">
    <citation type="journal article" date="2002" name="Proc. Natl. Acad. Sci. U.S.A.">
        <title>The complete genome sequence of Chlorobium tepidum TLS, a photosynthetic, anaerobic, green-sulfur bacterium.</title>
        <authorList>
            <person name="Eisen J.A."/>
            <person name="Nelson K.E."/>
            <person name="Paulsen I.T."/>
            <person name="Heidelberg J.F."/>
            <person name="Wu M."/>
            <person name="Dodson R.J."/>
            <person name="DeBoy R.T."/>
            <person name="Gwinn M.L."/>
            <person name="Nelson W.C."/>
            <person name="Haft D.H."/>
            <person name="Hickey E.K."/>
            <person name="Peterson J.D."/>
            <person name="Durkin A.S."/>
            <person name="Kolonay J.F."/>
            <person name="Yang F."/>
            <person name="Holt I.E."/>
            <person name="Umayam L.A."/>
            <person name="Mason T.M."/>
            <person name="Brenner M."/>
            <person name="Shea T.P."/>
            <person name="Parksey D.S."/>
            <person name="Nierman W.C."/>
            <person name="Feldblyum T.V."/>
            <person name="Hansen C.L."/>
            <person name="Craven M.B."/>
            <person name="Radune D."/>
            <person name="Vamathevan J.J."/>
            <person name="Khouri H.M."/>
            <person name="White O."/>
            <person name="Gruber T.M."/>
            <person name="Ketchum K.A."/>
            <person name="Venter J.C."/>
            <person name="Tettelin H."/>
            <person name="Bryant D.A."/>
            <person name="Fraser C.M."/>
        </authorList>
    </citation>
    <scope>NUCLEOTIDE SEQUENCE [LARGE SCALE GENOMIC DNA]</scope>
    <source>
        <strain>ATCC 49652 / DSM 12025 / NBRC 103806 / TLS</strain>
    </source>
</reference>
<accession>Q8KF55</accession>
<dbReference type="EC" id="5.3.1.16" evidence="1"/>
<dbReference type="EMBL" id="AE006470">
    <property type="protein sequence ID" value="AAM71719.1"/>
    <property type="molecule type" value="Genomic_DNA"/>
</dbReference>
<dbReference type="RefSeq" id="NP_661377.1">
    <property type="nucleotide sequence ID" value="NC_002932.3"/>
</dbReference>
<dbReference type="RefSeq" id="WP_010932164.1">
    <property type="nucleotide sequence ID" value="NC_002932.3"/>
</dbReference>
<dbReference type="SMR" id="Q8KF55"/>
<dbReference type="STRING" id="194439.CT0477"/>
<dbReference type="EnsemblBacteria" id="AAM71719">
    <property type="protein sequence ID" value="AAM71719"/>
    <property type="gene ID" value="CT0477"/>
</dbReference>
<dbReference type="KEGG" id="cte:CT0477"/>
<dbReference type="PATRIC" id="fig|194439.7.peg.462"/>
<dbReference type="eggNOG" id="COG0106">
    <property type="taxonomic scope" value="Bacteria"/>
</dbReference>
<dbReference type="HOGENOM" id="CLU_048577_1_1_10"/>
<dbReference type="OrthoDB" id="9807749at2"/>
<dbReference type="UniPathway" id="UPA00031">
    <property type="reaction ID" value="UER00009"/>
</dbReference>
<dbReference type="Proteomes" id="UP000001007">
    <property type="component" value="Chromosome"/>
</dbReference>
<dbReference type="GO" id="GO:0005737">
    <property type="term" value="C:cytoplasm"/>
    <property type="evidence" value="ECO:0007669"/>
    <property type="project" value="UniProtKB-SubCell"/>
</dbReference>
<dbReference type="GO" id="GO:0003949">
    <property type="term" value="F:1-(5-phosphoribosyl)-5-[(5-phosphoribosylamino)methylideneamino]imidazole-4-carboxamide isomerase activity"/>
    <property type="evidence" value="ECO:0007669"/>
    <property type="project" value="UniProtKB-UniRule"/>
</dbReference>
<dbReference type="GO" id="GO:0000105">
    <property type="term" value="P:L-histidine biosynthetic process"/>
    <property type="evidence" value="ECO:0007669"/>
    <property type="project" value="UniProtKB-UniRule"/>
</dbReference>
<dbReference type="GO" id="GO:0000162">
    <property type="term" value="P:L-tryptophan biosynthetic process"/>
    <property type="evidence" value="ECO:0007669"/>
    <property type="project" value="TreeGrafter"/>
</dbReference>
<dbReference type="CDD" id="cd04732">
    <property type="entry name" value="HisA"/>
    <property type="match status" value="1"/>
</dbReference>
<dbReference type="FunFam" id="3.20.20.70:FF:000009">
    <property type="entry name" value="1-(5-phosphoribosyl)-5-[(5-phosphoribosylamino)methylideneamino] imidazole-4-carboxamide isomerase"/>
    <property type="match status" value="1"/>
</dbReference>
<dbReference type="Gene3D" id="3.20.20.70">
    <property type="entry name" value="Aldolase class I"/>
    <property type="match status" value="1"/>
</dbReference>
<dbReference type="HAMAP" id="MF_01014">
    <property type="entry name" value="HisA"/>
    <property type="match status" value="1"/>
</dbReference>
<dbReference type="InterPro" id="IPR013785">
    <property type="entry name" value="Aldolase_TIM"/>
</dbReference>
<dbReference type="InterPro" id="IPR006062">
    <property type="entry name" value="His_biosynth"/>
</dbReference>
<dbReference type="InterPro" id="IPR006063">
    <property type="entry name" value="HisA_bact_arch"/>
</dbReference>
<dbReference type="InterPro" id="IPR044524">
    <property type="entry name" value="Isoase_HisA-like"/>
</dbReference>
<dbReference type="InterPro" id="IPR023016">
    <property type="entry name" value="Isoase_HisA-like_bact"/>
</dbReference>
<dbReference type="InterPro" id="IPR011060">
    <property type="entry name" value="RibuloseP-bd_barrel"/>
</dbReference>
<dbReference type="NCBIfam" id="TIGR00007">
    <property type="entry name" value="1-(5-phosphoribosyl)-5-[(5-phosphoribosylamino)methylideneamino]imidazole-4-carboxamide isomerase"/>
    <property type="match status" value="1"/>
</dbReference>
<dbReference type="PANTHER" id="PTHR43090">
    <property type="entry name" value="1-(5-PHOSPHORIBOSYL)-5-[(5-PHOSPHORIBOSYLAMINO)METHYLIDENEAMINO] IMIDAZOLE-4-CARBOXAMIDE ISOMERASE"/>
    <property type="match status" value="1"/>
</dbReference>
<dbReference type="PANTHER" id="PTHR43090:SF2">
    <property type="entry name" value="1-(5-PHOSPHORIBOSYL)-5-[(5-PHOSPHORIBOSYLAMINO)METHYLIDENEAMINO] IMIDAZOLE-4-CARBOXAMIDE ISOMERASE"/>
    <property type="match status" value="1"/>
</dbReference>
<dbReference type="Pfam" id="PF00977">
    <property type="entry name" value="His_biosynth"/>
    <property type="match status" value="1"/>
</dbReference>
<dbReference type="SUPFAM" id="SSF51366">
    <property type="entry name" value="Ribulose-phoshate binding barrel"/>
    <property type="match status" value="1"/>
</dbReference>
<name>HIS4_CHLTE</name>